<proteinExistence type="evidence at transcript level"/>
<protein>
    <recommendedName>
        <fullName>Protein RALF-like 21</fullName>
    </recommendedName>
</protein>
<organism>
    <name type="scientific">Arabidopsis thaliana</name>
    <name type="common">Mouse-ear cress</name>
    <dbReference type="NCBI Taxonomy" id="3702"/>
    <lineage>
        <taxon>Eukaryota</taxon>
        <taxon>Viridiplantae</taxon>
        <taxon>Streptophyta</taxon>
        <taxon>Embryophyta</taxon>
        <taxon>Tracheophyta</taxon>
        <taxon>Spermatophyta</taxon>
        <taxon>Magnoliopsida</taxon>
        <taxon>eudicotyledons</taxon>
        <taxon>Gunneridae</taxon>
        <taxon>Pentapetalae</taxon>
        <taxon>rosids</taxon>
        <taxon>malvids</taxon>
        <taxon>Brassicales</taxon>
        <taxon>Brassicaceae</taxon>
        <taxon>Camelineae</taxon>
        <taxon>Arabidopsis</taxon>
    </lineage>
</organism>
<gene>
    <name type="primary">RALFL21</name>
    <name type="ordered locus">At3g04735</name>
    <name type="ORF">F7O18</name>
</gene>
<dbReference type="EMBL" id="AC011437">
    <property type="status" value="NOT_ANNOTATED_CDS"/>
    <property type="molecule type" value="Genomic_DNA"/>
</dbReference>
<dbReference type="EMBL" id="CP002686">
    <property type="protein sequence ID" value="AEE74129.1"/>
    <property type="molecule type" value="Genomic_DNA"/>
</dbReference>
<dbReference type="RefSeq" id="NP_001078107.1">
    <property type="nucleotide sequence ID" value="NM_001084638.2"/>
</dbReference>
<dbReference type="SMR" id="A8MRF9"/>
<dbReference type="PaxDb" id="3702-AT3G04735.1"/>
<dbReference type="EnsemblPlants" id="AT3G04735.1">
    <property type="protein sequence ID" value="AT3G04735.1"/>
    <property type="gene ID" value="AT3G04735"/>
</dbReference>
<dbReference type="GeneID" id="5007983"/>
<dbReference type="Gramene" id="AT3G04735.1">
    <property type="protein sequence ID" value="AT3G04735.1"/>
    <property type="gene ID" value="AT3G04735"/>
</dbReference>
<dbReference type="KEGG" id="ath:AT3G04735"/>
<dbReference type="Araport" id="AT3G04735"/>
<dbReference type="TAIR" id="AT3G04735">
    <property type="gene designation" value="RALFL21"/>
</dbReference>
<dbReference type="HOGENOM" id="CLU_189400_0_0_1"/>
<dbReference type="InParanoid" id="A8MRF9"/>
<dbReference type="OMA" id="CVFISSM"/>
<dbReference type="OrthoDB" id="1060022at2759"/>
<dbReference type="PhylomeDB" id="A8MRF9"/>
<dbReference type="PRO" id="PR:A8MRF9"/>
<dbReference type="Proteomes" id="UP000006548">
    <property type="component" value="Chromosome 3"/>
</dbReference>
<dbReference type="ExpressionAtlas" id="A8MRF9">
    <property type="expression patterns" value="baseline and differential"/>
</dbReference>
<dbReference type="GO" id="GO:0048046">
    <property type="term" value="C:apoplast"/>
    <property type="evidence" value="ECO:0000250"/>
    <property type="project" value="TAIR"/>
</dbReference>
<dbReference type="GO" id="GO:0005179">
    <property type="term" value="F:hormone activity"/>
    <property type="evidence" value="ECO:0000250"/>
    <property type="project" value="UniProtKB"/>
</dbReference>
<dbReference type="GO" id="GO:0019722">
    <property type="term" value="P:calcium-mediated signaling"/>
    <property type="evidence" value="ECO:0000250"/>
    <property type="project" value="UniProtKB"/>
</dbReference>
<dbReference type="GO" id="GO:0007267">
    <property type="term" value="P:cell-cell signaling"/>
    <property type="evidence" value="ECO:0000250"/>
    <property type="project" value="TAIR"/>
</dbReference>
<dbReference type="GO" id="GO:0040008">
    <property type="term" value="P:regulation of growth"/>
    <property type="evidence" value="ECO:0007669"/>
    <property type="project" value="UniProtKB-ARBA"/>
</dbReference>
<dbReference type="InterPro" id="IPR008801">
    <property type="entry name" value="RALF"/>
</dbReference>
<dbReference type="PANTHER" id="PTHR34270">
    <property type="entry name" value="PROTEIN RALF-LIKE 15-RELATED"/>
    <property type="match status" value="1"/>
</dbReference>
<dbReference type="PANTHER" id="PTHR34270:SF3">
    <property type="entry name" value="PROTEIN RALF-LIKE 16-RELATED"/>
    <property type="match status" value="1"/>
</dbReference>
<dbReference type="Pfam" id="PF05498">
    <property type="entry name" value="RALF"/>
    <property type="match status" value="1"/>
</dbReference>
<sequence>MSNMKITNRFMLVATFIACVFISSMNMTVGKVIGYPGLKPDLPCDHHRYPSACAPSEQPVNPYRRGCSKIHRCRRDSPPAPISRKMLIRGQLIYNNAYNAYIQYP</sequence>
<evidence type="ECO:0000250" key="1"/>
<evidence type="ECO:0000255" key="2"/>
<evidence type="ECO:0000269" key="3">
    <source>
    </source>
</evidence>
<evidence type="ECO:0000305" key="4"/>
<name>RLF21_ARATH</name>
<feature type="signal peptide" evidence="2">
    <location>
        <begin position="1"/>
        <end position="30"/>
    </location>
</feature>
<feature type="chain" id="PRO_0000420315" description="Protein RALF-like 21">
    <location>
        <begin position="31"/>
        <end position="105"/>
    </location>
</feature>
<feature type="disulfide bond" evidence="1">
    <location>
        <begin position="44"/>
        <end position="53"/>
    </location>
</feature>
<feature type="disulfide bond" evidence="1">
    <location>
        <begin position="67"/>
        <end position="73"/>
    </location>
</feature>
<comment type="function">
    <text evidence="1">Cell signaling peptide that may regulate plant stress, growth, and development. Mediates a rapid alkalinization of extracellular space by mediating a transient increase in the cytoplasmic Ca(2+) concentration leading to a calcium-dependent signaling events through a cell surface receptor and a concomitant activation of some intracellular mitogen-activated protein kinases (By similarity).</text>
</comment>
<comment type="subcellular location">
    <subcellularLocation>
        <location evidence="1">Secreted</location>
    </subcellularLocation>
</comment>
<comment type="tissue specificity">
    <text evidence="3">Expressed in seeds and rosettes.</text>
</comment>
<comment type="similarity">
    <text evidence="4">Belongs to the plant rapid alkalinization factor (RALF) family.</text>
</comment>
<accession>A8MRF9</accession>
<keyword id="KW-1015">Disulfide bond</keyword>
<keyword id="KW-0372">Hormone</keyword>
<keyword id="KW-1185">Reference proteome</keyword>
<keyword id="KW-0964">Secreted</keyword>
<keyword id="KW-0732">Signal</keyword>
<reference key="1">
    <citation type="journal article" date="2000" name="Nature">
        <title>Sequence and analysis of chromosome 3 of the plant Arabidopsis thaliana.</title>
        <authorList>
            <person name="Salanoubat M."/>
            <person name="Lemcke K."/>
            <person name="Rieger M."/>
            <person name="Ansorge W."/>
            <person name="Unseld M."/>
            <person name="Fartmann B."/>
            <person name="Valle G."/>
            <person name="Bloecker H."/>
            <person name="Perez-Alonso M."/>
            <person name="Obermaier B."/>
            <person name="Delseny M."/>
            <person name="Boutry M."/>
            <person name="Grivell L.A."/>
            <person name="Mache R."/>
            <person name="Puigdomenech P."/>
            <person name="De Simone V."/>
            <person name="Choisne N."/>
            <person name="Artiguenave F."/>
            <person name="Robert C."/>
            <person name="Brottier P."/>
            <person name="Wincker P."/>
            <person name="Cattolico L."/>
            <person name="Weissenbach J."/>
            <person name="Saurin W."/>
            <person name="Quetier F."/>
            <person name="Schaefer M."/>
            <person name="Mueller-Auer S."/>
            <person name="Gabel C."/>
            <person name="Fuchs M."/>
            <person name="Benes V."/>
            <person name="Wurmbach E."/>
            <person name="Drzonek H."/>
            <person name="Erfle H."/>
            <person name="Jordan N."/>
            <person name="Bangert S."/>
            <person name="Wiedelmann R."/>
            <person name="Kranz H."/>
            <person name="Voss H."/>
            <person name="Holland R."/>
            <person name="Brandt P."/>
            <person name="Nyakatura G."/>
            <person name="Vezzi A."/>
            <person name="D'Angelo M."/>
            <person name="Pallavicini A."/>
            <person name="Toppo S."/>
            <person name="Simionati B."/>
            <person name="Conrad A."/>
            <person name="Hornischer K."/>
            <person name="Kauer G."/>
            <person name="Loehnert T.-H."/>
            <person name="Nordsiek G."/>
            <person name="Reichelt J."/>
            <person name="Scharfe M."/>
            <person name="Schoen O."/>
            <person name="Bargues M."/>
            <person name="Terol J."/>
            <person name="Climent J."/>
            <person name="Navarro P."/>
            <person name="Collado C."/>
            <person name="Perez-Perez A."/>
            <person name="Ottenwaelder B."/>
            <person name="Duchemin D."/>
            <person name="Cooke R."/>
            <person name="Laudie M."/>
            <person name="Berger-Llauro C."/>
            <person name="Purnelle B."/>
            <person name="Masuy D."/>
            <person name="de Haan M."/>
            <person name="Maarse A.C."/>
            <person name="Alcaraz J.-P."/>
            <person name="Cottet A."/>
            <person name="Casacuberta E."/>
            <person name="Monfort A."/>
            <person name="Argiriou A."/>
            <person name="Flores M."/>
            <person name="Liguori R."/>
            <person name="Vitale D."/>
            <person name="Mannhaupt G."/>
            <person name="Haase D."/>
            <person name="Schoof H."/>
            <person name="Rudd S."/>
            <person name="Zaccaria P."/>
            <person name="Mewes H.-W."/>
            <person name="Mayer K.F.X."/>
            <person name="Kaul S."/>
            <person name="Town C.D."/>
            <person name="Koo H.L."/>
            <person name="Tallon L.J."/>
            <person name="Jenkins J."/>
            <person name="Rooney T."/>
            <person name="Rizzo M."/>
            <person name="Walts A."/>
            <person name="Utterback T."/>
            <person name="Fujii C.Y."/>
            <person name="Shea T.P."/>
            <person name="Creasy T.H."/>
            <person name="Haas B."/>
            <person name="Maiti R."/>
            <person name="Wu D."/>
            <person name="Peterson J."/>
            <person name="Van Aken S."/>
            <person name="Pai G."/>
            <person name="Militscher J."/>
            <person name="Sellers P."/>
            <person name="Gill J.E."/>
            <person name="Feldblyum T.V."/>
            <person name="Preuss D."/>
            <person name="Lin X."/>
            <person name="Nierman W.C."/>
            <person name="Salzberg S.L."/>
            <person name="White O."/>
            <person name="Venter J.C."/>
            <person name="Fraser C.M."/>
            <person name="Kaneko T."/>
            <person name="Nakamura Y."/>
            <person name="Sato S."/>
            <person name="Kato T."/>
            <person name="Asamizu E."/>
            <person name="Sasamoto S."/>
            <person name="Kimura T."/>
            <person name="Idesawa K."/>
            <person name="Kawashima K."/>
            <person name="Kishida Y."/>
            <person name="Kiyokawa C."/>
            <person name="Kohara M."/>
            <person name="Matsumoto M."/>
            <person name="Matsuno A."/>
            <person name="Muraki A."/>
            <person name="Nakayama S."/>
            <person name="Nakazaki N."/>
            <person name="Shinpo S."/>
            <person name="Takeuchi C."/>
            <person name="Wada T."/>
            <person name="Watanabe A."/>
            <person name="Yamada M."/>
            <person name="Yasuda M."/>
            <person name="Tabata S."/>
        </authorList>
    </citation>
    <scope>NUCLEOTIDE SEQUENCE [LARGE SCALE GENOMIC DNA]</scope>
    <source>
        <strain>cv. Columbia</strain>
    </source>
</reference>
<reference key="2">
    <citation type="journal article" date="2017" name="Plant J.">
        <title>Araport11: a complete reannotation of the Arabidopsis thaliana reference genome.</title>
        <authorList>
            <person name="Cheng C.Y."/>
            <person name="Krishnakumar V."/>
            <person name="Chan A.P."/>
            <person name="Thibaud-Nissen F."/>
            <person name="Schobel S."/>
            <person name="Town C.D."/>
        </authorList>
    </citation>
    <scope>GENOME REANNOTATION</scope>
    <source>
        <strain>cv. Columbia</strain>
    </source>
</reference>
<reference key="3">
    <citation type="journal article" date="2002" name="In Silico Biol.">
        <title>Peptomics, identification of novel cationic Arabidopsis peptides with conserved sequence motifs.</title>
        <authorList>
            <person name="Olsen A.N."/>
            <person name="Mundy J."/>
            <person name="Skriver K."/>
        </authorList>
    </citation>
    <scope>TISSUE SPECIFICITY</scope>
    <scope>GENE FAMILY</scope>
    <scope>NOMENCLATURE</scope>
</reference>